<protein>
    <recommendedName>
        <fullName evidence="1">Ribosomal RNA large subunit methyltransferase I</fullName>
        <ecNumber evidence="1">2.1.1.191</ecNumber>
    </recommendedName>
    <alternativeName>
        <fullName evidence="1">23S rRNA m5C1962 methyltransferase</fullName>
    </alternativeName>
    <alternativeName>
        <fullName evidence="1">rRNA (cytosine-C(5)-)-methyltransferase RlmI</fullName>
    </alternativeName>
</protein>
<comment type="function">
    <text evidence="1">Specifically methylates the cytosine at position 1962 (m5C1962) of 23S rRNA.</text>
</comment>
<comment type="catalytic activity">
    <reaction evidence="1">
        <text>cytidine(1962) in 23S rRNA + S-adenosyl-L-methionine = 5-methylcytidine(1962) in 23S rRNA + S-adenosyl-L-homocysteine + H(+)</text>
        <dbReference type="Rhea" id="RHEA:42912"/>
        <dbReference type="Rhea" id="RHEA-COMP:10382"/>
        <dbReference type="Rhea" id="RHEA-COMP:10386"/>
        <dbReference type="ChEBI" id="CHEBI:15378"/>
        <dbReference type="ChEBI" id="CHEBI:57856"/>
        <dbReference type="ChEBI" id="CHEBI:59789"/>
        <dbReference type="ChEBI" id="CHEBI:74483"/>
        <dbReference type="ChEBI" id="CHEBI:82748"/>
        <dbReference type="EC" id="2.1.1.191"/>
    </reaction>
</comment>
<comment type="subcellular location">
    <subcellularLocation>
        <location evidence="1">Cytoplasm</location>
    </subcellularLocation>
</comment>
<comment type="similarity">
    <text evidence="1">Belongs to the methyltransferase superfamily. RlmI family.</text>
</comment>
<evidence type="ECO:0000255" key="1">
    <source>
        <dbReference type="HAMAP-Rule" id="MF_01857"/>
    </source>
</evidence>
<proteinExistence type="inferred from homology"/>
<keyword id="KW-0963">Cytoplasm</keyword>
<keyword id="KW-0489">Methyltransferase</keyword>
<keyword id="KW-1185">Reference proteome</keyword>
<keyword id="KW-0694">RNA-binding</keyword>
<keyword id="KW-0698">rRNA processing</keyword>
<keyword id="KW-0949">S-adenosyl-L-methionine</keyword>
<keyword id="KW-0808">Transferase</keyword>
<organism>
    <name type="scientific">Shigella boydii serotype 18 (strain CDC 3083-94 / BS512)</name>
    <dbReference type="NCBI Taxonomy" id="344609"/>
    <lineage>
        <taxon>Bacteria</taxon>
        <taxon>Pseudomonadati</taxon>
        <taxon>Pseudomonadota</taxon>
        <taxon>Gammaproteobacteria</taxon>
        <taxon>Enterobacterales</taxon>
        <taxon>Enterobacteriaceae</taxon>
        <taxon>Shigella</taxon>
    </lineage>
</organism>
<gene>
    <name evidence="1" type="primary">rlmI</name>
    <name type="ordered locus">SbBS512_E2348</name>
</gene>
<accession>B2TTS7</accession>
<reference key="1">
    <citation type="submission" date="2008-05" db="EMBL/GenBank/DDBJ databases">
        <title>Complete sequence of Shigella boydii serotype 18 strain BS512.</title>
        <authorList>
            <person name="Rasko D.A."/>
            <person name="Rosovitz M."/>
            <person name="Maurelli A.T."/>
            <person name="Myers G."/>
            <person name="Seshadri R."/>
            <person name="Cer R."/>
            <person name="Jiang L."/>
            <person name="Ravel J."/>
            <person name="Sebastian Y."/>
        </authorList>
    </citation>
    <scope>NUCLEOTIDE SEQUENCE [LARGE SCALE GENOMIC DNA]</scope>
    <source>
        <strain>CDC 3083-94 / BS512</strain>
    </source>
</reference>
<name>RLMI_SHIB3</name>
<feature type="chain" id="PRO_0000366266" description="Ribosomal RNA large subunit methyltransferase I">
    <location>
        <begin position="1"/>
        <end position="396"/>
    </location>
</feature>
<feature type="domain" description="PUA" evidence="1">
    <location>
        <begin position="2"/>
        <end position="81"/>
    </location>
</feature>
<sequence>MSVRLVLAKGREKSLLRRHPWVFSGTVARMEGKASLGETIDIVDHQGKWLARGAYSPASQIRARVWTFDPSESIDIAFFSRRLQQAQKWRDWLAQKDGLDSYRLIAGESDGLPGITIDRFGNFLVLQLLSAGAEYQRAALVSALQTLYPECAIYDRSDVAVRKKEGMELTLGLVTGELPPALLPIEEHGMKLLVDIQHGHKTGYYLDQRDSRLATRRYVENKRVLNCFSYTGGFAVSALMGGCSQVVSVDTSQEALDIARQNVELNKLDLSKAEFVRDDVFKLLRTYRDRGEKFDVIVMDPPKFVENKSQLMGACRGYKDINMLAIQLLNEGGILLTFSCSGLMTSDLFQKIIADAAIDAGRDVQFIEQFRQAADHPVIATYPEGLYLKGFACRVM</sequence>
<dbReference type="EC" id="2.1.1.191" evidence="1"/>
<dbReference type="EMBL" id="CP001063">
    <property type="protein sequence ID" value="ACD09014.1"/>
    <property type="molecule type" value="Genomic_DNA"/>
</dbReference>
<dbReference type="RefSeq" id="WP_000116324.1">
    <property type="nucleotide sequence ID" value="NC_010658.1"/>
</dbReference>
<dbReference type="SMR" id="B2TTS7"/>
<dbReference type="STRING" id="344609.SbBS512_E2348"/>
<dbReference type="KEGG" id="sbc:SbBS512_E2348"/>
<dbReference type="HOGENOM" id="CLU_014042_0_0_6"/>
<dbReference type="Proteomes" id="UP000001030">
    <property type="component" value="Chromosome"/>
</dbReference>
<dbReference type="GO" id="GO:0005737">
    <property type="term" value="C:cytoplasm"/>
    <property type="evidence" value="ECO:0007669"/>
    <property type="project" value="UniProtKB-SubCell"/>
</dbReference>
<dbReference type="GO" id="GO:0003723">
    <property type="term" value="F:RNA binding"/>
    <property type="evidence" value="ECO:0007669"/>
    <property type="project" value="UniProtKB-KW"/>
</dbReference>
<dbReference type="GO" id="GO:0016434">
    <property type="term" value="F:rRNA (cytosine) methyltransferase activity"/>
    <property type="evidence" value="ECO:0007669"/>
    <property type="project" value="UniProtKB-UniRule"/>
</dbReference>
<dbReference type="CDD" id="cd02440">
    <property type="entry name" value="AdoMet_MTases"/>
    <property type="match status" value="1"/>
</dbReference>
<dbReference type="CDD" id="cd21153">
    <property type="entry name" value="PUA_RlmI"/>
    <property type="match status" value="1"/>
</dbReference>
<dbReference type="CDD" id="cd11572">
    <property type="entry name" value="RlmI_M_like"/>
    <property type="match status" value="1"/>
</dbReference>
<dbReference type="FunFam" id="2.30.130.10:FF:000005">
    <property type="entry name" value="Ribosomal RNA large subunit methyltransferase I"/>
    <property type="match status" value="1"/>
</dbReference>
<dbReference type="FunFam" id="3.30.750.80:FF:000002">
    <property type="entry name" value="Ribosomal RNA large subunit methyltransferase I"/>
    <property type="match status" value="1"/>
</dbReference>
<dbReference type="FunFam" id="3.40.50.150:FF:000044">
    <property type="entry name" value="Ribosomal RNA large subunit methyltransferase I"/>
    <property type="match status" value="1"/>
</dbReference>
<dbReference type="Gene3D" id="2.30.130.10">
    <property type="entry name" value="PUA domain"/>
    <property type="match status" value="1"/>
</dbReference>
<dbReference type="Gene3D" id="3.30.750.80">
    <property type="entry name" value="RNA methyltransferase domain (HRMD) like"/>
    <property type="match status" value="1"/>
</dbReference>
<dbReference type="Gene3D" id="3.40.50.150">
    <property type="entry name" value="Vaccinia Virus protein VP39"/>
    <property type="match status" value="1"/>
</dbReference>
<dbReference type="HAMAP" id="MF_01857">
    <property type="entry name" value="23SrRNA_methyltr_I"/>
    <property type="match status" value="1"/>
</dbReference>
<dbReference type="InterPro" id="IPR002478">
    <property type="entry name" value="PUA"/>
</dbReference>
<dbReference type="InterPro" id="IPR015947">
    <property type="entry name" value="PUA-like_sf"/>
</dbReference>
<dbReference type="InterPro" id="IPR036974">
    <property type="entry name" value="PUA_sf"/>
</dbReference>
<dbReference type="InterPro" id="IPR023542">
    <property type="entry name" value="RLMI"/>
</dbReference>
<dbReference type="InterPro" id="IPR041532">
    <property type="entry name" value="RlmI-like_PUA"/>
</dbReference>
<dbReference type="InterPro" id="IPR019614">
    <property type="entry name" value="SAM-dep_methyl-trfase"/>
</dbReference>
<dbReference type="InterPro" id="IPR029063">
    <property type="entry name" value="SAM-dependent_MTases_sf"/>
</dbReference>
<dbReference type="NCBIfam" id="NF011707">
    <property type="entry name" value="PRK15128.1"/>
    <property type="match status" value="1"/>
</dbReference>
<dbReference type="PANTHER" id="PTHR42873">
    <property type="entry name" value="RIBOSOMAL RNA LARGE SUBUNIT METHYLTRANSFERASE"/>
    <property type="match status" value="1"/>
</dbReference>
<dbReference type="PANTHER" id="PTHR42873:SF1">
    <property type="entry name" value="S-ADENOSYLMETHIONINE-DEPENDENT METHYLTRANSFERASE DOMAIN-CONTAINING PROTEIN"/>
    <property type="match status" value="1"/>
</dbReference>
<dbReference type="Pfam" id="PF10672">
    <property type="entry name" value="Methyltrans_SAM"/>
    <property type="match status" value="1"/>
</dbReference>
<dbReference type="Pfam" id="PF17785">
    <property type="entry name" value="PUA_3"/>
    <property type="match status" value="1"/>
</dbReference>
<dbReference type="SMART" id="SM00359">
    <property type="entry name" value="PUA"/>
    <property type="match status" value="1"/>
</dbReference>
<dbReference type="SUPFAM" id="SSF88697">
    <property type="entry name" value="PUA domain-like"/>
    <property type="match status" value="1"/>
</dbReference>
<dbReference type="SUPFAM" id="SSF53335">
    <property type="entry name" value="S-adenosyl-L-methionine-dependent methyltransferases"/>
    <property type="match status" value="1"/>
</dbReference>
<dbReference type="PROSITE" id="PS50890">
    <property type="entry name" value="PUA"/>
    <property type="match status" value="1"/>
</dbReference>